<evidence type="ECO:0000250" key="1">
    <source>
        <dbReference type="UniProtKB" id="O27939"/>
    </source>
</evidence>
<evidence type="ECO:0000250" key="2">
    <source>
        <dbReference type="UniProtKB" id="P24182"/>
    </source>
</evidence>
<evidence type="ECO:0000255" key="3"/>
<evidence type="ECO:0000255" key="4">
    <source>
        <dbReference type="PROSITE-ProRule" id="PRU00409"/>
    </source>
</evidence>
<evidence type="ECO:0000269" key="5">
    <source>
    </source>
</evidence>
<evidence type="ECO:0000269" key="6">
    <source>
    </source>
</evidence>
<evidence type="ECO:0000303" key="7">
    <source>
    </source>
</evidence>
<evidence type="ECO:0000305" key="8"/>
<evidence type="ECO:0000312" key="9">
    <source>
        <dbReference type="EMBL" id="BAF34931.1"/>
    </source>
</evidence>
<evidence type="ECO:0000312" key="10">
    <source>
        <dbReference type="EMBL" id="BAI69844.1"/>
    </source>
</evidence>
<evidence type="ECO:0007829" key="11">
    <source>
        <dbReference type="PDB" id="7KBL"/>
    </source>
</evidence>
<evidence type="ECO:0007829" key="12">
    <source>
        <dbReference type="PDB" id="7KCT"/>
    </source>
</evidence>
<reference evidence="8 9" key="1">
    <citation type="journal article" date="2006" name="Mol. Microbiol.">
        <title>A novel oxalosuccinate-forming enzyme involved in the reductive carboxylation of 2-oxoglutarate in Hydrogenobacter thermophilus TK-6.</title>
        <authorList>
            <person name="Aoshima M."/>
            <person name="Igarashi Y."/>
        </authorList>
    </citation>
    <scope>NUCLEOTIDE SEQUENCE [GENOMIC DNA]</scope>
    <scope>CATALYTIC ACTIVITY</scope>
    <scope>SUBUNIT</scope>
</reference>
<reference evidence="10" key="2">
    <citation type="journal article" date="2010" name="J. Bacteriol.">
        <title>Complete genome sequence of the thermophilic, obligately chemolithoautotrophic hydrogen-oxidizing bacterium Hydrogenobacter thermophilus TK-6.</title>
        <authorList>
            <person name="Arai H."/>
            <person name="Kanbe H."/>
            <person name="Ishii M."/>
            <person name="Igarashi Y."/>
        </authorList>
    </citation>
    <scope>NUCLEOTIDE SEQUENCE [LARGE SCALE GENOMIC DNA]</scope>
    <source>
        <strain>DSM 6534 / IAM 12695 / TK-6</strain>
    </source>
</reference>
<reference key="3">
    <citation type="journal article" date="2011" name="Stand. Genomic Sci.">
        <title>Complete genome sequence of Hydrogenobacter thermophilus type strain (TK-6).</title>
        <authorList>
            <consortium name="US DOE Joint Genome Institute (JGI-PGF)"/>
            <person name="Zeytun A."/>
            <person name="Sikorski J."/>
            <person name="Nolan M."/>
            <person name="Lapidus A."/>
            <person name="Lucas S."/>
            <person name="Han J."/>
            <person name="Tice H."/>
            <person name="Cheng J.F."/>
            <person name="Tapia R."/>
            <person name="Goodwin L."/>
            <person name="Pitluck S."/>
            <person name="Liolios K."/>
            <person name="Ivanova N."/>
            <person name="Mavromatis K."/>
            <person name="Mikhailova N."/>
            <person name="Ovchinnikova G."/>
            <person name="Pati A."/>
            <person name="Chen A."/>
            <person name="Palaniappan K."/>
            <person name="Ngatchou-Djao O.D."/>
            <person name="Land M."/>
            <person name="Hauser L."/>
            <person name="Jeffries C.D."/>
            <person name="Han C."/>
            <person name="Detter J.C."/>
            <person name="Ubler S."/>
            <person name="Rohde M."/>
            <person name="Tindall B.J."/>
            <person name="Goker M."/>
            <person name="Wirth R."/>
            <person name="Woyke T."/>
            <person name="Bristow J."/>
            <person name="Eisen J.A."/>
            <person name="Markowitz V."/>
            <person name="Hugenholtz P."/>
            <person name="Klenk H.P."/>
            <person name="Kyrpides N.C."/>
        </authorList>
    </citation>
    <scope>NUCLEOTIDE SEQUENCE [LARGE SCALE GENOMIC DNA]</scope>
    <source>
        <strain>DSM 6534 / IAM 12695 / TK-6</strain>
    </source>
</reference>
<reference evidence="8" key="4">
    <citation type="journal article" date="2004" name="Mol. Microbiol.">
        <title>A novel biotin protein required for reductive carboxylation of 2-oxoglutarate by isocitrate dehydrogenase in Hydrogenobacter thermophilus TK-6.</title>
        <authorList>
            <person name="Aoshima M."/>
            <person name="Ishii M."/>
            <person name="Igarashi Y."/>
        </authorList>
    </citation>
    <scope>PROTEIN SEQUENCE OF 1-30</scope>
    <scope>SUBUNIT</scope>
</reference>
<feature type="chain" id="PRO_0000402798" description="2-oxoglutarate carboxylase small subunit">
    <location>
        <begin position="1"/>
        <end position="472"/>
    </location>
</feature>
<feature type="domain" description="Biotin carboxylation" evidence="3">
    <location>
        <begin position="1"/>
        <end position="445"/>
    </location>
</feature>
<feature type="domain" description="ATP-grasp" evidence="4">
    <location>
        <begin position="119"/>
        <end position="316"/>
    </location>
</feature>
<feature type="active site" evidence="2 3">
    <location>
        <position position="291"/>
    </location>
</feature>
<feature type="binding site" evidence="2">
    <location>
        <position position="115"/>
    </location>
    <ligand>
        <name>ATP</name>
        <dbReference type="ChEBI" id="CHEBI:30616"/>
    </ligand>
</feature>
<feature type="binding site" evidence="2">
    <location>
        <position position="199"/>
    </location>
    <ligand>
        <name>ATP</name>
        <dbReference type="ChEBI" id="CHEBI:30616"/>
    </ligand>
</feature>
<feature type="strand" evidence="12">
    <location>
        <begin position="3"/>
        <end position="7"/>
    </location>
</feature>
<feature type="helix" evidence="12">
    <location>
        <begin position="11"/>
        <end position="23"/>
    </location>
</feature>
<feature type="strand" evidence="12">
    <location>
        <begin position="27"/>
        <end position="32"/>
    </location>
</feature>
<feature type="helix" evidence="12">
    <location>
        <begin position="34"/>
        <end position="36"/>
    </location>
</feature>
<feature type="helix" evidence="12">
    <location>
        <begin position="40"/>
        <end position="44"/>
    </location>
</feature>
<feature type="strand" evidence="12">
    <location>
        <begin position="45"/>
        <end position="50"/>
    </location>
</feature>
<feature type="helix" evidence="12">
    <location>
        <begin position="57"/>
        <end position="60"/>
    </location>
</feature>
<feature type="helix" evidence="12">
    <location>
        <begin position="62"/>
        <end position="72"/>
    </location>
</feature>
<feature type="strand" evidence="12">
    <location>
        <begin position="76"/>
        <end position="78"/>
    </location>
</feature>
<feature type="turn" evidence="12">
    <location>
        <begin position="83"/>
        <end position="86"/>
    </location>
</feature>
<feature type="helix" evidence="12">
    <location>
        <begin position="88"/>
        <end position="96"/>
    </location>
</feature>
<feature type="strand" evidence="12">
    <location>
        <begin position="100"/>
        <end position="104"/>
    </location>
</feature>
<feature type="helix" evidence="12">
    <location>
        <begin position="106"/>
        <end position="111"/>
    </location>
</feature>
<feature type="helix" evidence="12">
    <location>
        <begin position="115"/>
        <end position="124"/>
    </location>
</feature>
<feature type="strand" evidence="12">
    <location>
        <begin position="134"/>
        <end position="136"/>
    </location>
</feature>
<feature type="helix" evidence="12">
    <location>
        <begin position="140"/>
        <end position="150"/>
    </location>
</feature>
<feature type="strand" evidence="12">
    <location>
        <begin position="152"/>
        <end position="158"/>
    </location>
</feature>
<feature type="strand" evidence="11">
    <location>
        <begin position="159"/>
        <end position="163"/>
    </location>
</feature>
<feature type="strand" evidence="12">
    <location>
        <begin position="166"/>
        <end position="172"/>
    </location>
</feature>
<feature type="helix" evidence="12">
    <location>
        <begin position="173"/>
        <end position="191"/>
    </location>
</feature>
<feature type="strand" evidence="12">
    <location>
        <begin position="196"/>
        <end position="200"/>
    </location>
</feature>
<feature type="strand" evidence="12">
    <location>
        <begin position="206"/>
        <end position="214"/>
    </location>
</feature>
<feature type="strand" evidence="12">
    <location>
        <begin position="220"/>
        <end position="227"/>
    </location>
</feature>
<feature type="strand" evidence="12">
    <location>
        <begin position="235"/>
        <end position="242"/>
    </location>
</feature>
<feature type="helix" evidence="12">
    <location>
        <begin position="248"/>
        <end position="264"/>
    </location>
</feature>
<feature type="strand" evidence="12">
    <location>
        <begin position="269"/>
        <end position="277"/>
    </location>
</feature>
<feature type="strand" evidence="12">
    <location>
        <begin position="283"/>
        <end position="289"/>
    </location>
</feature>
<feature type="helix" evidence="12">
    <location>
        <begin position="296"/>
        <end position="303"/>
    </location>
</feature>
<feature type="helix" evidence="12">
    <location>
        <begin position="307"/>
        <end position="315"/>
    </location>
</feature>
<feature type="helix" evidence="12">
    <location>
        <begin position="324"/>
        <end position="326"/>
    </location>
</feature>
<feature type="strand" evidence="12">
    <location>
        <begin position="331"/>
        <end position="341"/>
    </location>
</feature>
<feature type="helix" evidence="12">
    <location>
        <begin position="343"/>
        <end position="345"/>
    </location>
</feature>
<feature type="strand" evidence="12">
    <location>
        <begin position="356"/>
        <end position="358"/>
    </location>
</feature>
<feature type="strand" evidence="12">
    <location>
        <begin position="365"/>
        <end position="369"/>
    </location>
</feature>
<feature type="strand" evidence="11">
    <location>
        <begin position="379"/>
        <end position="381"/>
    </location>
</feature>
<feature type="strand" evidence="12">
    <location>
        <begin position="384"/>
        <end position="394"/>
    </location>
</feature>
<feature type="helix" evidence="12">
    <location>
        <begin position="395"/>
        <end position="408"/>
    </location>
</feature>
<feature type="helix" evidence="12">
    <location>
        <begin position="418"/>
        <end position="426"/>
    </location>
</feature>
<feature type="helix" evidence="12">
    <location>
        <begin position="428"/>
        <end position="431"/>
    </location>
</feature>
<feature type="helix" evidence="12">
    <location>
        <begin position="439"/>
        <end position="442"/>
    </location>
</feature>
<feature type="helix" evidence="12">
    <location>
        <begin position="444"/>
        <end position="447"/>
    </location>
</feature>
<name>2OCS_HYDTT</name>
<proteinExistence type="evidence at protein level"/>
<keyword id="KW-0002">3D-structure</keyword>
<keyword id="KW-0067">ATP-binding</keyword>
<keyword id="KW-0092">Biotin</keyword>
<keyword id="KW-0903">Direct protein sequencing</keyword>
<keyword id="KW-0436">Ligase</keyword>
<keyword id="KW-0460">Magnesium</keyword>
<keyword id="KW-0547">Nucleotide-binding</keyword>
<keyword id="KW-1185">Reference proteome</keyword>
<accession>D3DJ42</accession>
<accession>Q05KD9</accession>
<gene>
    <name evidence="10" type="primary">cfiB</name>
    <name type="ordered locus">HTH_1393</name>
    <name type="ordered locus">Hydth_1383</name>
</gene>
<organism>
    <name type="scientific">Hydrogenobacter thermophilus (strain DSM 6534 / IAM 12695 / TK-6)</name>
    <dbReference type="NCBI Taxonomy" id="608538"/>
    <lineage>
        <taxon>Bacteria</taxon>
        <taxon>Pseudomonadati</taxon>
        <taxon>Aquificota</taxon>
        <taxon>Aquificia</taxon>
        <taxon>Aquificales</taxon>
        <taxon>Aquificaceae</taxon>
        <taxon>Hydrogenobacter</taxon>
    </lineage>
</organism>
<dbReference type="EC" id="6.4.1.7"/>
<dbReference type="EMBL" id="AB246889">
    <property type="protein sequence ID" value="BAF34931.1"/>
    <property type="molecule type" value="Genomic_DNA"/>
</dbReference>
<dbReference type="EMBL" id="AP011112">
    <property type="protein sequence ID" value="BAI69844.1"/>
    <property type="molecule type" value="Genomic_DNA"/>
</dbReference>
<dbReference type="EMBL" id="CP002221">
    <property type="protein sequence ID" value="ADO45768.1"/>
    <property type="molecule type" value="Genomic_DNA"/>
</dbReference>
<dbReference type="RefSeq" id="WP_012964024.1">
    <property type="nucleotide sequence ID" value="NC_013799.1"/>
</dbReference>
<dbReference type="PDB" id="7KBL">
    <property type="method" value="X-ray"/>
    <property type="resolution" value="2.30 A"/>
    <property type="chains" value="A/B=1-472"/>
</dbReference>
<dbReference type="PDB" id="7KC7">
    <property type="method" value="X-ray"/>
    <property type="resolution" value="2.20 A"/>
    <property type="chains" value="A/B=1-472"/>
</dbReference>
<dbReference type="PDB" id="7KCT">
    <property type="method" value="X-ray"/>
    <property type="resolution" value="2.02 A"/>
    <property type="chains" value="A/B=1-472"/>
</dbReference>
<dbReference type="PDBsum" id="7KBL"/>
<dbReference type="PDBsum" id="7KC7"/>
<dbReference type="PDBsum" id="7KCT"/>
<dbReference type="SMR" id="D3DJ42"/>
<dbReference type="STRING" id="608538.HTH_1393"/>
<dbReference type="KEGG" id="hte:Hydth_1383"/>
<dbReference type="KEGG" id="hth:HTH_1393"/>
<dbReference type="PATRIC" id="fig|608538.5.peg.1414"/>
<dbReference type="eggNOG" id="COG0439">
    <property type="taxonomic scope" value="Bacteria"/>
</dbReference>
<dbReference type="HOGENOM" id="CLU_000395_3_2_0"/>
<dbReference type="OrthoDB" id="9807469at2"/>
<dbReference type="Proteomes" id="UP000002574">
    <property type="component" value="Chromosome"/>
</dbReference>
<dbReference type="GO" id="GO:0034029">
    <property type="term" value="F:2-oxoglutarate carboxylase activity"/>
    <property type="evidence" value="ECO:0007669"/>
    <property type="project" value="UniProtKB-EC"/>
</dbReference>
<dbReference type="GO" id="GO:0005524">
    <property type="term" value="F:ATP binding"/>
    <property type="evidence" value="ECO:0007669"/>
    <property type="project" value="UniProtKB-KW"/>
</dbReference>
<dbReference type="GO" id="GO:0046872">
    <property type="term" value="F:metal ion binding"/>
    <property type="evidence" value="ECO:0007669"/>
    <property type="project" value="InterPro"/>
</dbReference>
<dbReference type="FunFam" id="3.30.1490.20:FF:000018">
    <property type="entry name" value="Biotin carboxylase"/>
    <property type="match status" value="1"/>
</dbReference>
<dbReference type="FunFam" id="3.40.50.20:FF:000010">
    <property type="entry name" value="Propionyl-CoA carboxylase subunit alpha"/>
    <property type="match status" value="1"/>
</dbReference>
<dbReference type="Gene3D" id="3.30.470.20">
    <property type="entry name" value="ATP-grasp fold, B domain"/>
    <property type="match status" value="1"/>
</dbReference>
<dbReference type="InterPro" id="IPR051602">
    <property type="entry name" value="ACC_Biotin_Carboxylase"/>
</dbReference>
<dbReference type="InterPro" id="IPR004549">
    <property type="entry name" value="Acetyl_CoA_COase_biotin_COase"/>
</dbReference>
<dbReference type="InterPro" id="IPR011761">
    <property type="entry name" value="ATP-grasp"/>
</dbReference>
<dbReference type="InterPro" id="IPR005481">
    <property type="entry name" value="BC-like_N"/>
</dbReference>
<dbReference type="InterPro" id="IPR011764">
    <property type="entry name" value="Biotin_carboxylation_dom"/>
</dbReference>
<dbReference type="InterPro" id="IPR005482">
    <property type="entry name" value="Biotin_COase_C"/>
</dbReference>
<dbReference type="InterPro" id="IPR005479">
    <property type="entry name" value="CbamoylP_synth_lsu-like_ATP-bd"/>
</dbReference>
<dbReference type="InterPro" id="IPR016185">
    <property type="entry name" value="PreATP-grasp_dom_sf"/>
</dbReference>
<dbReference type="InterPro" id="IPR011054">
    <property type="entry name" value="Rudment_hybrid_motif"/>
</dbReference>
<dbReference type="NCBIfam" id="TIGR00514">
    <property type="entry name" value="accC"/>
    <property type="match status" value="1"/>
</dbReference>
<dbReference type="NCBIfam" id="NF006367">
    <property type="entry name" value="PRK08591.1"/>
    <property type="match status" value="1"/>
</dbReference>
<dbReference type="PANTHER" id="PTHR48095:SF1">
    <property type="entry name" value="BIOTIN CARBOXYLASE"/>
    <property type="match status" value="1"/>
</dbReference>
<dbReference type="PANTHER" id="PTHR48095">
    <property type="entry name" value="PYRUVATE CARBOXYLASE SUBUNIT A"/>
    <property type="match status" value="1"/>
</dbReference>
<dbReference type="Pfam" id="PF02785">
    <property type="entry name" value="Biotin_carb_C"/>
    <property type="match status" value="1"/>
</dbReference>
<dbReference type="Pfam" id="PF00289">
    <property type="entry name" value="Biotin_carb_N"/>
    <property type="match status" value="1"/>
</dbReference>
<dbReference type="Pfam" id="PF02786">
    <property type="entry name" value="CPSase_L_D2"/>
    <property type="match status" value="1"/>
</dbReference>
<dbReference type="SMART" id="SM00878">
    <property type="entry name" value="Biotin_carb_C"/>
    <property type="match status" value="1"/>
</dbReference>
<dbReference type="SUPFAM" id="SSF56059">
    <property type="entry name" value="Glutathione synthetase ATP-binding domain-like"/>
    <property type="match status" value="1"/>
</dbReference>
<dbReference type="SUPFAM" id="SSF52440">
    <property type="entry name" value="PreATP-grasp domain"/>
    <property type="match status" value="1"/>
</dbReference>
<dbReference type="SUPFAM" id="SSF51246">
    <property type="entry name" value="Rudiment single hybrid motif"/>
    <property type="match status" value="1"/>
</dbReference>
<dbReference type="PROSITE" id="PS50975">
    <property type="entry name" value="ATP_GRASP"/>
    <property type="match status" value="1"/>
</dbReference>
<dbReference type="PROSITE" id="PS50979">
    <property type="entry name" value="BC"/>
    <property type="match status" value="1"/>
</dbReference>
<dbReference type="PROSITE" id="PS00866">
    <property type="entry name" value="CPSASE_1"/>
    <property type="match status" value="1"/>
</dbReference>
<dbReference type="PROSITE" id="PS00867">
    <property type="entry name" value="CPSASE_2"/>
    <property type="match status" value="1"/>
</dbReference>
<protein>
    <recommendedName>
        <fullName evidence="10">2-oxoglutarate carboxylase small subunit</fullName>
        <ecNumber>6.4.1.7</ecNumber>
    </recommendedName>
    <alternativeName>
        <fullName evidence="7">2-oxoglutarate carboxylase beta subunit</fullName>
    </alternativeName>
</protein>
<comment type="catalytic activity">
    <reaction evidence="6">
        <text>hydrogencarbonate + 2-oxoglutarate + ATP = (S)-oxalosuccinate + ADP + phosphate + H(+)</text>
        <dbReference type="Rhea" id="RHEA:20425"/>
        <dbReference type="ChEBI" id="CHEBI:15378"/>
        <dbReference type="ChEBI" id="CHEBI:16810"/>
        <dbReference type="ChEBI" id="CHEBI:17544"/>
        <dbReference type="ChEBI" id="CHEBI:30616"/>
        <dbReference type="ChEBI" id="CHEBI:43474"/>
        <dbReference type="ChEBI" id="CHEBI:153066"/>
        <dbReference type="ChEBI" id="CHEBI:456216"/>
        <dbReference type="EC" id="6.4.1.7"/>
    </reaction>
</comment>
<comment type="cofactor">
    <cofactor evidence="1">
        <name>Mg(2+)</name>
        <dbReference type="ChEBI" id="CHEBI:18420"/>
    </cofactor>
    <cofactor evidence="1">
        <name>Mn(2+)</name>
        <dbReference type="ChEBI" id="CHEBI:29035"/>
    </cofactor>
    <cofactor evidence="1">
        <name>Co(2+)</name>
        <dbReference type="ChEBI" id="CHEBI:48828"/>
    </cofactor>
</comment>
<comment type="subunit">
    <text evidence="5 6">Heterohexadecamer of 8 large subunits and 8 small subunits.</text>
</comment>
<sequence length="472" mass="53386">MFKKVLVANRGEIACRVIRACKELGIQTVAIYNEIESTARHVKMADEAYMIGVNPLDTYLNAERIVDLALEVGAEAIHPGYGFLAENEHFARLCEEKGITFIGPHWKVIELMGDKARSKEVMKRAGVPTVPGSDGILKDVEEAKRIAKEIGYPVLLKASAGGGGRGIRICRNEEELVRNYENAYNEAVKAFGRGDLLLEKYIENPKHIEFQVLGDKYGNVIHLGERDCSIQRRNQKLVEIAPSLLLTPEQREYYGSLVVKAAKEIGYYSAGTMEFIADEKGNLYFIEMNTRIQVEHPVTEMITGVDIVKWQIRIAAGERLRYSQEDIRFNGYSIECRINAEDPKKGFAPSIGTIERYYVPGGFGIRVEHASSKGYEITPYYDSLIAKLIVWAPLWEVAVDRMRSALETYEISGVKTTIPLLINIMKDKDFRDGKFTTRYLEEHPHVFDYAEHRDKEDFVAFISAVIASYHGL</sequence>